<gene>
    <name evidence="3" type="primary">EPFL8</name>
    <name evidence="6" type="ordered locus">At1g80133</name>
    <name type="ORF">F18B13</name>
</gene>
<dbReference type="EMBL" id="AC009322">
    <property type="status" value="NOT_ANNOTATED_CDS"/>
    <property type="molecule type" value="Genomic_DNA"/>
</dbReference>
<dbReference type="EMBL" id="CP002684">
    <property type="protein sequence ID" value="AEE36361.1"/>
    <property type="molecule type" value="Genomic_DNA"/>
</dbReference>
<dbReference type="EMBL" id="DQ487475">
    <property type="protein sequence ID" value="ABF59196.1"/>
    <property type="molecule type" value="mRNA"/>
</dbReference>
<dbReference type="EMBL" id="DQ652630">
    <property type="protein sequence ID" value="ABK28321.1"/>
    <property type="status" value="ALT_SEQ"/>
    <property type="molecule type" value="mRNA"/>
</dbReference>
<dbReference type="RefSeq" id="NP_001077850.1">
    <property type="nucleotide sequence ID" value="NM_001084381.3"/>
</dbReference>
<dbReference type="SMR" id="Q1G3V9"/>
<dbReference type="STRING" id="3702.Q1G3V9"/>
<dbReference type="PaxDb" id="3702-AT1G80133.1"/>
<dbReference type="EnsemblPlants" id="AT1G80133.1">
    <property type="protein sequence ID" value="AT1G80133.1"/>
    <property type="gene ID" value="AT1G80133"/>
</dbReference>
<dbReference type="GeneID" id="5007859"/>
<dbReference type="Gramene" id="AT1G80133.1">
    <property type="protein sequence ID" value="AT1G80133.1"/>
    <property type="gene ID" value="AT1G80133"/>
</dbReference>
<dbReference type="KEGG" id="ath:AT1G80133"/>
<dbReference type="Araport" id="AT1G80133"/>
<dbReference type="TAIR" id="AT1G80133">
    <property type="gene designation" value="ATEPFL8"/>
</dbReference>
<dbReference type="HOGENOM" id="CLU_135272_2_1_1"/>
<dbReference type="InParanoid" id="Q1G3V9"/>
<dbReference type="OMA" id="WICRCRD"/>
<dbReference type="OrthoDB" id="1874659at2759"/>
<dbReference type="PhylomeDB" id="Q1G3V9"/>
<dbReference type="PRO" id="PR:Q1G3V9"/>
<dbReference type="Proteomes" id="UP000006548">
    <property type="component" value="Chromosome 1"/>
</dbReference>
<dbReference type="ExpressionAtlas" id="Q1G3V9">
    <property type="expression patterns" value="baseline and differential"/>
</dbReference>
<dbReference type="GO" id="GO:0005576">
    <property type="term" value="C:extracellular region"/>
    <property type="evidence" value="ECO:0007669"/>
    <property type="project" value="UniProtKB-SubCell"/>
</dbReference>
<dbReference type="GO" id="GO:0010052">
    <property type="term" value="P:guard cell differentiation"/>
    <property type="evidence" value="ECO:0000250"/>
    <property type="project" value="UniProtKB"/>
</dbReference>
<dbReference type="GO" id="GO:0010374">
    <property type="term" value="P:stomatal complex development"/>
    <property type="evidence" value="ECO:0000250"/>
    <property type="project" value="UniProtKB"/>
</dbReference>
<dbReference type="InterPro" id="IPR039455">
    <property type="entry name" value="EPFL"/>
</dbReference>
<dbReference type="PANTHER" id="PTHR33109">
    <property type="entry name" value="EPIDERMAL PATTERNING FACTOR-LIKE PROTEIN 4"/>
    <property type="match status" value="1"/>
</dbReference>
<dbReference type="PANTHER" id="PTHR33109:SF60">
    <property type="entry name" value="EPIDERMAL PATTERNING FACTOR-LIKE PROTEIN 8"/>
    <property type="match status" value="1"/>
</dbReference>
<dbReference type="Pfam" id="PF17181">
    <property type="entry name" value="EPF"/>
    <property type="match status" value="1"/>
</dbReference>
<proteinExistence type="evidence at protein level"/>
<protein>
    <recommendedName>
        <fullName evidence="3">EPIDERMAL PATTERNING FACTOR-like protein 8</fullName>
        <shortName>EPF-like protein 8</shortName>
    </recommendedName>
    <component>
        <recommendedName>
            <fullName evidence="5">MEPFL8</fullName>
        </recommendedName>
    </component>
</protein>
<comment type="function">
    <text evidence="1">Controls stomatal patterning.</text>
</comment>
<comment type="subcellular location">
    <subcellularLocation>
        <location evidence="5">Secreted</location>
    </subcellularLocation>
</comment>
<comment type="similarity">
    <text evidence="5">Belongs to the plant cysteine rich small secretory peptide family. Epidermal patterning factor subfamily.</text>
</comment>
<comment type="sequence caution" evidence="5">
    <conflict type="erroneous termination">
        <sequence resource="EMBL-CDS" id="ABK28321"/>
    </conflict>
    <text>Extended C-terminus.</text>
</comment>
<organism>
    <name type="scientific">Arabidopsis thaliana</name>
    <name type="common">Mouse-ear cress</name>
    <dbReference type="NCBI Taxonomy" id="3702"/>
    <lineage>
        <taxon>Eukaryota</taxon>
        <taxon>Viridiplantae</taxon>
        <taxon>Streptophyta</taxon>
        <taxon>Embryophyta</taxon>
        <taxon>Tracheophyta</taxon>
        <taxon>Spermatophyta</taxon>
        <taxon>Magnoliopsida</taxon>
        <taxon>eudicotyledons</taxon>
        <taxon>Gunneridae</taxon>
        <taxon>Pentapetalae</taxon>
        <taxon>rosids</taxon>
        <taxon>malvids</taxon>
        <taxon>Brassicales</taxon>
        <taxon>Brassicaceae</taxon>
        <taxon>Camelineae</taxon>
        <taxon>Arabidopsis</taxon>
    </lineage>
</organism>
<name>EPFL8_ARATH</name>
<evidence type="ECO:0000250" key="1"/>
<evidence type="ECO:0000255" key="2"/>
<evidence type="ECO:0000303" key="3">
    <source>
    </source>
</evidence>
<evidence type="ECO:0000303" key="4">
    <source>
    </source>
</evidence>
<evidence type="ECO:0000305" key="5"/>
<evidence type="ECO:0000312" key="6">
    <source>
        <dbReference type="Araport" id="AT1G80133"/>
    </source>
</evidence>
<sequence length="99" mass="11321">MDSSRKYKRCGFGAALFVANIFFSLLSLHCISGAHGHQQRMKESVMGSEPPVCATKCRNCKPCLPYLFDIRGAHDDDDDSEPYYPVKWICRCRDRVFEP</sequence>
<feature type="signal peptide" evidence="2">
    <location>
        <begin position="1"/>
        <end position="35"/>
    </location>
</feature>
<feature type="chain" id="PRO_0000392506" description="EPIDERMAL PATTERNING FACTOR-like protein 8">
    <location>
        <begin position="36"/>
        <end position="99"/>
    </location>
</feature>
<feature type="chain" id="PRO_0000430514" description="MEPFL8" evidence="4">
    <location>
        <begin position="46"/>
        <end position="99"/>
    </location>
</feature>
<feature type="disulfide bond" evidence="4">
    <location>
        <begin position="53"/>
        <end position="90"/>
    </location>
</feature>
<feature type="disulfide bond" evidence="4">
    <location>
        <begin position="57"/>
        <end position="63"/>
    </location>
</feature>
<feature type="disulfide bond" evidence="4">
    <location>
        <begin position="60"/>
        <end position="92"/>
    </location>
</feature>
<keyword id="KW-0217">Developmental protein</keyword>
<keyword id="KW-1015">Disulfide bond</keyword>
<keyword id="KW-1185">Reference proteome</keyword>
<keyword id="KW-0964">Secreted</keyword>
<keyword id="KW-0732">Signal</keyword>
<accession>Q1G3V9</accession>
<accession>A0MDL4</accession>
<reference key="1">
    <citation type="journal article" date="2000" name="Nature">
        <title>Sequence and analysis of chromosome 1 of the plant Arabidopsis thaliana.</title>
        <authorList>
            <person name="Theologis A."/>
            <person name="Ecker J.R."/>
            <person name="Palm C.J."/>
            <person name="Federspiel N.A."/>
            <person name="Kaul S."/>
            <person name="White O."/>
            <person name="Alonso J."/>
            <person name="Altafi H."/>
            <person name="Araujo R."/>
            <person name="Bowman C.L."/>
            <person name="Brooks S.Y."/>
            <person name="Buehler E."/>
            <person name="Chan A."/>
            <person name="Chao Q."/>
            <person name="Chen H."/>
            <person name="Cheuk R.F."/>
            <person name="Chin C.W."/>
            <person name="Chung M.K."/>
            <person name="Conn L."/>
            <person name="Conway A.B."/>
            <person name="Conway A.R."/>
            <person name="Creasy T.H."/>
            <person name="Dewar K."/>
            <person name="Dunn P."/>
            <person name="Etgu P."/>
            <person name="Feldblyum T.V."/>
            <person name="Feng J.-D."/>
            <person name="Fong B."/>
            <person name="Fujii C.Y."/>
            <person name="Gill J.E."/>
            <person name="Goldsmith A.D."/>
            <person name="Haas B."/>
            <person name="Hansen N.F."/>
            <person name="Hughes B."/>
            <person name="Huizar L."/>
            <person name="Hunter J.L."/>
            <person name="Jenkins J."/>
            <person name="Johnson-Hopson C."/>
            <person name="Khan S."/>
            <person name="Khaykin E."/>
            <person name="Kim C.J."/>
            <person name="Koo H.L."/>
            <person name="Kremenetskaia I."/>
            <person name="Kurtz D.B."/>
            <person name="Kwan A."/>
            <person name="Lam B."/>
            <person name="Langin-Hooper S."/>
            <person name="Lee A."/>
            <person name="Lee J.M."/>
            <person name="Lenz C.A."/>
            <person name="Li J.H."/>
            <person name="Li Y.-P."/>
            <person name="Lin X."/>
            <person name="Liu S.X."/>
            <person name="Liu Z.A."/>
            <person name="Luros J.S."/>
            <person name="Maiti R."/>
            <person name="Marziali A."/>
            <person name="Militscher J."/>
            <person name="Miranda M."/>
            <person name="Nguyen M."/>
            <person name="Nierman W.C."/>
            <person name="Osborne B.I."/>
            <person name="Pai G."/>
            <person name="Peterson J."/>
            <person name="Pham P.K."/>
            <person name="Rizzo M."/>
            <person name="Rooney T."/>
            <person name="Rowley D."/>
            <person name="Sakano H."/>
            <person name="Salzberg S.L."/>
            <person name="Schwartz J.R."/>
            <person name="Shinn P."/>
            <person name="Southwick A.M."/>
            <person name="Sun H."/>
            <person name="Tallon L.J."/>
            <person name="Tambunga G."/>
            <person name="Toriumi M.J."/>
            <person name="Town C.D."/>
            <person name="Utterback T."/>
            <person name="Van Aken S."/>
            <person name="Vaysberg M."/>
            <person name="Vysotskaia V.S."/>
            <person name="Walker M."/>
            <person name="Wu D."/>
            <person name="Yu G."/>
            <person name="Fraser C.M."/>
            <person name="Venter J.C."/>
            <person name="Davis R.W."/>
        </authorList>
    </citation>
    <scope>NUCLEOTIDE SEQUENCE [LARGE SCALE GENOMIC DNA]</scope>
    <source>
        <strain>cv. Columbia</strain>
    </source>
</reference>
<reference key="2">
    <citation type="journal article" date="2017" name="Plant J.">
        <title>Araport11: a complete reannotation of the Arabidopsis thaliana reference genome.</title>
        <authorList>
            <person name="Cheng C.Y."/>
            <person name="Krishnakumar V."/>
            <person name="Chan A.P."/>
            <person name="Thibaud-Nissen F."/>
            <person name="Schobel S."/>
            <person name="Town C.D."/>
        </authorList>
    </citation>
    <scope>GENOME REANNOTATION</scope>
    <source>
        <strain>cv. Columbia</strain>
    </source>
</reference>
<reference key="3">
    <citation type="journal article" date="2006" name="Plant Biotechnol. J.">
        <title>Simultaneous high-throughput recombinational cloning of open reading frames in closed and open configurations.</title>
        <authorList>
            <person name="Underwood B.A."/>
            <person name="Vanderhaeghen R."/>
            <person name="Whitford R."/>
            <person name="Town C.D."/>
            <person name="Hilson P."/>
        </authorList>
    </citation>
    <scope>NUCLEOTIDE SEQUENCE [LARGE SCALE MRNA]</scope>
    <source>
        <strain>cv. Columbia</strain>
    </source>
</reference>
<reference key="4">
    <citation type="journal article" date="2009" name="Plant Cell Physiol.">
        <title>Epidermal cell density is autoregulated via a secretory peptide, EPIDERMAL PATTERNING FACTOR 2 in Arabidopsis leaves.</title>
        <authorList>
            <person name="Hara K."/>
            <person name="Yokoo T."/>
            <person name="Kajita R."/>
            <person name="Onishi T."/>
            <person name="Yahata S."/>
            <person name="Peterson K.M."/>
            <person name="Torii K.U."/>
            <person name="Kakimoto T."/>
        </authorList>
    </citation>
    <scope>GENE FAMILY</scope>
    <scope>NOMENCLATURE</scope>
</reference>
<reference key="5">
    <citation type="journal article" date="2011" name="Nat. Commun.">
        <title>The NMR structure of stomagen reveals the basis of stomatal density regulation by plant peptide hormones.</title>
        <authorList>
            <person name="Ohki S."/>
            <person name="Takeuchi M."/>
            <person name="Mori M."/>
        </authorList>
    </citation>
    <scope>3D-STRUCTURE MODELING</scope>
    <scope>DISULFIDE BOND</scope>
</reference>